<sequence>MIKNPKVLILTAHYGNGHVQVAKTLEQTFRQKGIEDVIVCDLFGESHPFITDITKYLYLKSYTIGKELYRLFYYGVEKIYDKKIASWYANFGRKRLKTLLQVEKPDIVINTFPIIAVPELKKQTGISIPVYNVLTDFCVHKIWIHREVDRYFVATDHVKELMVDIGVPAEQIVETGIPIRSSFELKVNPEIIYTKYQLCKNKKILLIVAGAHGVLGNVKELCQSFMSVPNLQIVVVCGKNEALKQDLLSLQKQNSDALKVFGYVENIDELFRVTSCMITKPGGITLSEAAALQVPVILYKPVPGQENENAMYFERKGAAVVIRDDSEVFAKTEALLQDDVKLLQMKEAMKSIYLPEPAGHIVDAILAENHAEPRHIPIKSPALAQSFT</sequence>
<dbReference type="EC" id="2.4.1.315"/>
<dbReference type="EMBL" id="CP001176">
    <property type="protein sequence ID" value="ACK63897.1"/>
    <property type="molecule type" value="Genomic_DNA"/>
</dbReference>
<dbReference type="RefSeq" id="WP_000594690.1">
    <property type="nucleotide sequence ID" value="NZ_VEHB01000009.1"/>
</dbReference>
<dbReference type="SMR" id="B7H9Q4"/>
<dbReference type="CAZy" id="GT28">
    <property type="family name" value="Glycosyltransferase Family 28"/>
</dbReference>
<dbReference type="KEGG" id="bcb:BCB4264_A0514"/>
<dbReference type="HOGENOM" id="CLU_028367_0_1_9"/>
<dbReference type="UniPathway" id="UPA00894"/>
<dbReference type="Proteomes" id="UP000007096">
    <property type="component" value="Chromosome"/>
</dbReference>
<dbReference type="GO" id="GO:0005886">
    <property type="term" value="C:plasma membrane"/>
    <property type="evidence" value="ECO:0007669"/>
    <property type="project" value="UniProtKB-SubCell"/>
</dbReference>
<dbReference type="GO" id="GO:0047228">
    <property type="term" value="F:1,2-diacylglycerol 3-glucosyltransferase activity"/>
    <property type="evidence" value="ECO:0007669"/>
    <property type="project" value="UniProtKB-UniRule"/>
</dbReference>
<dbReference type="GO" id="GO:0009246">
    <property type="term" value="P:enterobacterial common antigen biosynthetic process"/>
    <property type="evidence" value="ECO:0007669"/>
    <property type="project" value="UniProtKB-UniPathway"/>
</dbReference>
<dbReference type="GO" id="GO:0009247">
    <property type="term" value="P:glycolipid biosynthetic process"/>
    <property type="evidence" value="ECO:0007669"/>
    <property type="project" value="UniProtKB-UniRule"/>
</dbReference>
<dbReference type="GO" id="GO:0070395">
    <property type="term" value="P:lipoteichoic acid biosynthetic process"/>
    <property type="evidence" value="ECO:0007669"/>
    <property type="project" value="UniProtKB-UniRule"/>
</dbReference>
<dbReference type="CDD" id="cd17507">
    <property type="entry name" value="GT28_Beta-DGS-like"/>
    <property type="match status" value="1"/>
</dbReference>
<dbReference type="Gene3D" id="3.40.50.2000">
    <property type="entry name" value="Glycogen Phosphorylase B"/>
    <property type="match status" value="1"/>
</dbReference>
<dbReference type="HAMAP" id="MF_01280">
    <property type="entry name" value="Diacylglyc_glucosyltr"/>
    <property type="match status" value="1"/>
</dbReference>
<dbReference type="InterPro" id="IPR009695">
    <property type="entry name" value="Diacylglyc_glucosyltr_N"/>
</dbReference>
<dbReference type="InterPro" id="IPR007235">
    <property type="entry name" value="Glyco_trans_28_C"/>
</dbReference>
<dbReference type="InterPro" id="IPR050519">
    <property type="entry name" value="Glycosyltransf_28_UgtP"/>
</dbReference>
<dbReference type="InterPro" id="IPR023589">
    <property type="entry name" value="Pro_diacylglycrl_glcsylTrfase"/>
</dbReference>
<dbReference type="NCBIfam" id="NF010135">
    <property type="entry name" value="PRK13609.1"/>
    <property type="match status" value="1"/>
</dbReference>
<dbReference type="PANTHER" id="PTHR43025">
    <property type="entry name" value="MONOGALACTOSYLDIACYLGLYCEROL SYNTHASE"/>
    <property type="match status" value="1"/>
</dbReference>
<dbReference type="PANTHER" id="PTHR43025:SF3">
    <property type="entry name" value="MONOGALACTOSYLDIACYLGLYCEROL SYNTHASE 1, CHLOROPLASTIC"/>
    <property type="match status" value="1"/>
</dbReference>
<dbReference type="Pfam" id="PF04101">
    <property type="entry name" value="Glyco_tran_28_C"/>
    <property type="match status" value="1"/>
</dbReference>
<dbReference type="Pfam" id="PF06925">
    <property type="entry name" value="MGDG_synth"/>
    <property type="match status" value="1"/>
</dbReference>
<dbReference type="SUPFAM" id="SSF53756">
    <property type="entry name" value="UDP-Glycosyltransferase/glycogen phosphorylase"/>
    <property type="match status" value="1"/>
</dbReference>
<proteinExistence type="inferred from homology"/>
<reference key="1">
    <citation type="submission" date="2008-10" db="EMBL/GenBank/DDBJ databases">
        <title>Genome sequence of Bacillus cereus B4264.</title>
        <authorList>
            <person name="Dodson R.J."/>
            <person name="Durkin A.S."/>
            <person name="Rosovitz M.J."/>
            <person name="Rasko D.A."/>
            <person name="Hoffmaster A."/>
            <person name="Ravel J."/>
            <person name="Sutton G."/>
        </authorList>
    </citation>
    <scope>NUCLEOTIDE SEQUENCE [LARGE SCALE GENOMIC DNA]</scope>
    <source>
        <strain>B4264</strain>
    </source>
</reference>
<feature type="chain" id="PRO_1000140342" description="Processive diacylglycerol beta-glucosyltransferase">
    <location>
        <begin position="1"/>
        <end position="388"/>
    </location>
</feature>
<name>UGTP_BACC4</name>
<gene>
    <name evidence="1" type="primary">ugtP</name>
    <name type="ordered locus">BCB4264_A0514</name>
</gene>
<keyword id="KW-0119">Carbohydrate metabolism</keyword>
<keyword id="KW-1003">Cell membrane</keyword>
<keyword id="KW-0328">Glycosyltransferase</keyword>
<keyword id="KW-0444">Lipid biosynthesis</keyword>
<keyword id="KW-0443">Lipid metabolism</keyword>
<keyword id="KW-0472">Membrane</keyword>
<keyword id="KW-0808">Transferase</keyword>
<organism>
    <name type="scientific">Bacillus cereus (strain B4264)</name>
    <dbReference type="NCBI Taxonomy" id="405532"/>
    <lineage>
        <taxon>Bacteria</taxon>
        <taxon>Bacillati</taxon>
        <taxon>Bacillota</taxon>
        <taxon>Bacilli</taxon>
        <taxon>Bacillales</taxon>
        <taxon>Bacillaceae</taxon>
        <taxon>Bacillus</taxon>
        <taxon>Bacillus cereus group</taxon>
    </lineage>
</organism>
<evidence type="ECO:0000255" key="1">
    <source>
        <dbReference type="HAMAP-Rule" id="MF_01280"/>
    </source>
</evidence>
<protein>
    <recommendedName>
        <fullName evidence="1">Processive diacylglycerol beta-glucosyltransferase</fullName>
        <ecNumber>2.4.1.315</ecNumber>
    </recommendedName>
    <alternativeName>
        <fullName evidence="1">Beta-diglucosyldiacylglycerol synthase</fullName>
        <shortName evidence="1">Beta-DGS</shortName>
        <shortName evidence="1">DGlcDAG synthase</shortName>
        <shortName evidence="1">Glc2-DAG synthase</shortName>
    </alternativeName>
    <alternativeName>
        <fullName evidence="1">Beta-gentiobiosyldiacylglycerol synthase</fullName>
    </alternativeName>
    <alternativeName>
        <fullName evidence="1">Beta-monoglucosyldiacylglycerol synthase</fullName>
        <shortName evidence="1">Beta-MGS</shortName>
        <shortName evidence="1">MGlcDAG synthase</shortName>
    </alternativeName>
    <alternativeName>
        <fullName evidence="1">Beta-triglucosyldiacylglycerol synthase</fullName>
        <shortName evidence="1">TGlcDAG synthase</shortName>
    </alternativeName>
    <alternativeName>
        <fullName>Diglucosyl diacylglycerol synthase (1,6-linking)</fullName>
    </alternativeName>
    <alternativeName>
        <fullName evidence="1">Glucosyl-beta-1,6-glucosyldiacylglycerol synthase</fullName>
    </alternativeName>
    <alternativeName>
        <fullName evidence="1">UDP glucosyltransferase</fullName>
    </alternativeName>
    <alternativeName>
        <fullName evidence="1">UDP-glucose:1,2-diacylglycerol-3-beta-D-glucosyltransferase</fullName>
    </alternativeName>
</protein>
<accession>B7H9Q4</accession>
<comment type="function">
    <text evidence="1">Processive glucosyltransferase involved in the biosynthesis of both the bilayer- and non-bilayer-forming membrane glucolipids. Is able to successively transfer up to three glucosyl residues to diacylglycerol (DAG), thereby catalyzing the formation of beta-monoglucosyl-DAG (3-O-(beta-D-glucopyranosyl)-1,2-diacyl-sn-glycerol), beta-diglucosyl-DAG (3-O-(beta-D-glucopyranosyl-beta-(1-&gt;6)-D-glucopyranosyl)-1,2-diacyl-sn-glycerol) and beta-triglucosyl-DAG (3-O-(beta-D-glucopyranosyl-beta-(1-&gt;6)-D-glucopyranosyl-beta-(1-&gt;6)-D-glucopyranosyl)-1,2-diacyl-sn-glycerol). Beta-diglucosyl-DAG is the predominant glycolipid found in Bacillales and is also used as a membrane anchor for lipoteichoic acid (LTA).</text>
</comment>
<comment type="catalytic activity">
    <reaction>
        <text>a 1,2-diacyl-3-O-(beta-D-glucopyranosyl)-sn-glycerol + UDP-alpha-D-glucose = a 1,2-diacyl-3-O-(beta-D-Glc-(1-&gt;6)-beta-D-Glc)-sn-glycerol + UDP + H(+)</text>
        <dbReference type="Rhea" id="RHEA:39031"/>
        <dbReference type="ChEBI" id="CHEBI:15378"/>
        <dbReference type="ChEBI" id="CHEBI:58223"/>
        <dbReference type="ChEBI" id="CHEBI:58885"/>
        <dbReference type="ChEBI" id="CHEBI:75799"/>
        <dbReference type="ChEBI" id="CHEBI:76264"/>
        <dbReference type="EC" id="2.4.1.315"/>
    </reaction>
</comment>
<comment type="catalytic activity">
    <reaction>
        <text>a 1,2-diacyl-3-O-(beta-D-Glc-(1-&gt;6)-beta-D-Glc)-sn-glycerol + UDP-alpha-D-glucose = a 1,2-diacyl-3-O-(beta-D-Glc-(1-&gt;6)-beta-D-Glc-(1-&gt;6)-beta-D-Glc)-sn-glycerol + UDP + H(+)</text>
        <dbReference type="Rhea" id="RHEA:39027"/>
        <dbReference type="ChEBI" id="CHEBI:15378"/>
        <dbReference type="ChEBI" id="CHEBI:58223"/>
        <dbReference type="ChEBI" id="CHEBI:58885"/>
        <dbReference type="ChEBI" id="CHEBI:76264"/>
        <dbReference type="ChEBI" id="CHEBI:76265"/>
        <dbReference type="EC" id="2.4.1.315"/>
    </reaction>
</comment>
<comment type="catalytic activity">
    <reaction evidence="1">
        <text>a 1,2-diacyl-sn-glycerol + UDP-alpha-D-glucose = a 1,2-diacyl-3-O-(beta-D-glucopyranosyl)-sn-glycerol + UDP + H(+)</text>
        <dbReference type="Rhea" id="RHEA:17285"/>
        <dbReference type="ChEBI" id="CHEBI:15378"/>
        <dbReference type="ChEBI" id="CHEBI:17815"/>
        <dbReference type="ChEBI" id="CHEBI:58223"/>
        <dbReference type="ChEBI" id="CHEBI:58885"/>
        <dbReference type="ChEBI" id="CHEBI:75799"/>
    </reaction>
</comment>
<comment type="pathway">
    <text evidence="1">Glycolipid metabolism; diglucosyl-diacylglycerol biosynthesis.</text>
</comment>
<comment type="subcellular location">
    <subcellularLocation>
        <location evidence="1">Cell membrane</location>
    </subcellularLocation>
</comment>
<comment type="similarity">
    <text evidence="1">Belongs to the glycosyltransferase 28 family. UgtP subfamily.</text>
</comment>